<keyword id="KW-0450">Lipoyl</keyword>
<proteinExistence type="inferred from homology"/>
<name>GCSH_THEFY</name>
<comment type="function">
    <text evidence="1">The glycine cleavage system catalyzes the degradation of glycine. The H protein shuttles the methylamine group of glycine from the P protein to the T protein.</text>
</comment>
<comment type="cofactor">
    <cofactor evidence="1">
        <name>(R)-lipoate</name>
        <dbReference type="ChEBI" id="CHEBI:83088"/>
    </cofactor>
    <text evidence="1">Binds 1 lipoyl cofactor covalently.</text>
</comment>
<comment type="subunit">
    <text evidence="1">The glycine cleavage system is composed of four proteins: P, T, L and H.</text>
</comment>
<comment type="similarity">
    <text evidence="1">Belongs to the GcvH family.</text>
</comment>
<feature type="chain" id="PRO_0000302456" description="Glycine cleavage system H protein">
    <location>
        <begin position="1"/>
        <end position="126"/>
    </location>
</feature>
<feature type="domain" description="Lipoyl-binding" evidence="2">
    <location>
        <begin position="22"/>
        <end position="104"/>
    </location>
</feature>
<feature type="modified residue" description="N6-lipoyllysine" evidence="1">
    <location>
        <position position="63"/>
    </location>
</feature>
<accession>Q47MD7</accession>
<protein>
    <recommendedName>
        <fullName evidence="1">Glycine cleavage system H protein</fullName>
    </recommendedName>
</protein>
<reference key="1">
    <citation type="journal article" date="2007" name="J. Bacteriol.">
        <title>Genome sequence and analysis of the soil cellulolytic actinomycete Thermobifida fusca YX.</title>
        <authorList>
            <person name="Lykidis A."/>
            <person name="Mavromatis K."/>
            <person name="Ivanova N."/>
            <person name="Anderson I."/>
            <person name="Land M."/>
            <person name="DiBartolo G."/>
            <person name="Martinez M."/>
            <person name="Lapidus A."/>
            <person name="Lucas S."/>
            <person name="Copeland A."/>
            <person name="Richardson P."/>
            <person name="Wilson D.B."/>
            <person name="Kyrpides N."/>
        </authorList>
    </citation>
    <scope>NUCLEOTIDE SEQUENCE [LARGE SCALE GENOMIC DNA]</scope>
    <source>
        <strain>YX</strain>
    </source>
</reference>
<gene>
    <name evidence="1" type="primary">gcvH</name>
    <name type="ordered locus">Tfu_2352</name>
</gene>
<dbReference type="EMBL" id="CP000088">
    <property type="protein sequence ID" value="AAZ56385.1"/>
    <property type="molecule type" value="Genomic_DNA"/>
</dbReference>
<dbReference type="RefSeq" id="WP_011292775.1">
    <property type="nucleotide sequence ID" value="NC_007333.1"/>
</dbReference>
<dbReference type="SMR" id="Q47MD7"/>
<dbReference type="STRING" id="269800.Tfu_2352"/>
<dbReference type="KEGG" id="tfu:Tfu_2352"/>
<dbReference type="eggNOG" id="COG0509">
    <property type="taxonomic scope" value="Bacteria"/>
</dbReference>
<dbReference type="HOGENOM" id="CLU_097408_2_2_11"/>
<dbReference type="OrthoDB" id="9796712at2"/>
<dbReference type="GO" id="GO:0005829">
    <property type="term" value="C:cytosol"/>
    <property type="evidence" value="ECO:0007669"/>
    <property type="project" value="TreeGrafter"/>
</dbReference>
<dbReference type="GO" id="GO:0005960">
    <property type="term" value="C:glycine cleavage complex"/>
    <property type="evidence" value="ECO:0007669"/>
    <property type="project" value="InterPro"/>
</dbReference>
<dbReference type="GO" id="GO:0019464">
    <property type="term" value="P:glycine decarboxylation via glycine cleavage system"/>
    <property type="evidence" value="ECO:0007669"/>
    <property type="project" value="UniProtKB-UniRule"/>
</dbReference>
<dbReference type="CDD" id="cd06848">
    <property type="entry name" value="GCS_H"/>
    <property type="match status" value="1"/>
</dbReference>
<dbReference type="Gene3D" id="2.40.50.100">
    <property type="match status" value="1"/>
</dbReference>
<dbReference type="HAMAP" id="MF_00272">
    <property type="entry name" value="GcvH"/>
    <property type="match status" value="1"/>
</dbReference>
<dbReference type="InterPro" id="IPR003016">
    <property type="entry name" value="2-oxoA_DH_lipoyl-BS"/>
</dbReference>
<dbReference type="InterPro" id="IPR000089">
    <property type="entry name" value="Biotin_lipoyl"/>
</dbReference>
<dbReference type="InterPro" id="IPR002930">
    <property type="entry name" value="GCV_H"/>
</dbReference>
<dbReference type="InterPro" id="IPR033753">
    <property type="entry name" value="GCV_H/Fam206"/>
</dbReference>
<dbReference type="InterPro" id="IPR017453">
    <property type="entry name" value="GCV_H_sub"/>
</dbReference>
<dbReference type="InterPro" id="IPR011053">
    <property type="entry name" value="Single_hybrid_motif"/>
</dbReference>
<dbReference type="NCBIfam" id="TIGR00527">
    <property type="entry name" value="gcvH"/>
    <property type="match status" value="1"/>
</dbReference>
<dbReference type="NCBIfam" id="NF002270">
    <property type="entry name" value="PRK01202.1"/>
    <property type="match status" value="1"/>
</dbReference>
<dbReference type="PANTHER" id="PTHR11715">
    <property type="entry name" value="GLYCINE CLEAVAGE SYSTEM H PROTEIN"/>
    <property type="match status" value="1"/>
</dbReference>
<dbReference type="PANTHER" id="PTHR11715:SF3">
    <property type="entry name" value="GLYCINE CLEAVAGE SYSTEM H PROTEIN-RELATED"/>
    <property type="match status" value="1"/>
</dbReference>
<dbReference type="Pfam" id="PF01597">
    <property type="entry name" value="GCV_H"/>
    <property type="match status" value="1"/>
</dbReference>
<dbReference type="SUPFAM" id="SSF51230">
    <property type="entry name" value="Single hybrid motif"/>
    <property type="match status" value="1"/>
</dbReference>
<dbReference type="PROSITE" id="PS50968">
    <property type="entry name" value="BIOTINYL_LIPOYL"/>
    <property type="match status" value="1"/>
</dbReference>
<dbReference type="PROSITE" id="PS00189">
    <property type="entry name" value="LIPOYL"/>
    <property type="match status" value="1"/>
</dbReference>
<sequence length="126" mass="13384">MSVPAELGYTKEHEWVAINEGIATVGITAFAAEALGDIVYVEPPEVGSTVTAGESCGEIESHKSVSELYSPVDGEVVDVNQAAVDDPELIGSDPYGRGWLFKVELAEEPADLLTPEQYTQLTEGEG</sequence>
<evidence type="ECO:0000255" key="1">
    <source>
        <dbReference type="HAMAP-Rule" id="MF_00272"/>
    </source>
</evidence>
<evidence type="ECO:0000255" key="2">
    <source>
        <dbReference type="PROSITE-ProRule" id="PRU01066"/>
    </source>
</evidence>
<organism>
    <name type="scientific">Thermobifida fusca (strain YX)</name>
    <dbReference type="NCBI Taxonomy" id="269800"/>
    <lineage>
        <taxon>Bacteria</taxon>
        <taxon>Bacillati</taxon>
        <taxon>Actinomycetota</taxon>
        <taxon>Actinomycetes</taxon>
        <taxon>Streptosporangiales</taxon>
        <taxon>Nocardiopsidaceae</taxon>
        <taxon>Thermobifida</taxon>
    </lineage>
</organism>